<protein>
    <recommendedName>
        <fullName>Cytochrome b</fullName>
    </recommendedName>
    <alternativeName>
        <fullName>Complex III subunit 3</fullName>
    </alternativeName>
    <alternativeName>
        <fullName>Complex III subunit III</fullName>
    </alternativeName>
    <alternativeName>
        <fullName>Cytochrome b-c1 complex subunit 3</fullName>
    </alternativeName>
    <alternativeName>
        <fullName>Ubiquinol-cytochrome-c reductase complex cytochrome b subunit</fullName>
    </alternativeName>
</protein>
<feature type="chain" id="PRO_0000060910" description="Cytochrome b">
    <location>
        <begin position="1"/>
        <end position="372"/>
    </location>
</feature>
<feature type="transmembrane region" description="Helical" evidence="2">
    <location>
        <begin position="25"/>
        <end position="45"/>
    </location>
</feature>
<feature type="transmembrane region" description="Helical" evidence="2">
    <location>
        <begin position="69"/>
        <end position="90"/>
    </location>
</feature>
<feature type="transmembrane region" description="Helical" evidence="2">
    <location>
        <begin position="105"/>
        <end position="125"/>
    </location>
</feature>
<feature type="transmembrane region" description="Helical" evidence="2">
    <location>
        <begin position="170"/>
        <end position="190"/>
    </location>
</feature>
<feature type="transmembrane region" description="Helical" evidence="2">
    <location>
        <begin position="218"/>
        <end position="238"/>
    </location>
</feature>
<feature type="transmembrane region" description="Helical" evidence="2">
    <location>
        <begin position="280"/>
        <end position="300"/>
    </location>
</feature>
<feature type="transmembrane region" description="Helical" evidence="2">
    <location>
        <begin position="312"/>
        <end position="332"/>
    </location>
</feature>
<feature type="transmembrane region" description="Helical" evidence="2">
    <location>
        <begin position="339"/>
        <end position="358"/>
    </location>
</feature>
<feature type="binding site" description="axial binding residue" evidence="2">
    <location>
        <position position="75"/>
    </location>
    <ligand>
        <name>heme b</name>
        <dbReference type="ChEBI" id="CHEBI:60344"/>
        <label>b562</label>
    </ligand>
    <ligandPart>
        <name>Fe</name>
        <dbReference type="ChEBI" id="CHEBI:18248"/>
    </ligandPart>
</feature>
<feature type="binding site" description="axial binding residue" evidence="2">
    <location>
        <position position="89"/>
    </location>
    <ligand>
        <name>heme b</name>
        <dbReference type="ChEBI" id="CHEBI:60344"/>
        <label>b566</label>
    </ligand>
    <ligandPart>
        <name>Fe</name>
        <dbReference type="ChEBI" id="CHEBI:18248"/>
    </ligandPart>
</feature>
<feature type="binding site" description="axial binding residue" evidence="2">
    <location>
        <position position="174"/>
    </location>
    <ligand>
        <name>heme b</name>
        <dbReference type="ChEBI" id="CHEBI:60344"/>
        <label>b562</label>
    </ligand>
    <ligandPart>
        <name>Fe</name>
        <dbReference type="ChEBI" id="CHEBI:18248"/>
    </ligandPart>
</feature>
<feature type="binding site" description="axial binding residue" evidence="2">
    <location>
        <position position="188"/>
    </location>
    <ligand>
        <name>heme b</name>
        <dbReference type="ChEBI" id="CHEBI:60344"/>
        <label>b566</label>
    </ligand>
    <ligandPart>
        <name>Fe</name>
        <dbReference type="ChEBI" id="CHEBI:18248"/>
    </ligandPart>
</feature>
<feature type="binding site" evidence="2">
    <location>
        <position position="193"/>
    </location>
    <ligand>
        <name>a ubiquinone</name>
        <dbReference type="ChEBI" id="CHEBI:16389"/>
    </ligand>
</feature>
<evidence type="ECO:0000250" key="1"/>
<evidence type="ECO:0000250" key="2">
    <source>
        <dbReference type="UniProtKB" id="P00157"/>
    </source>
</evidence>
<evidence type="ECO:0000255" key="3">
    <source>
        <dbReference type="PROSITE-ProRule" id="PRU00967"/>
    </source>
</evidence>
<evidence type="ECO:0000255" key="4">
    <source>
        <dbReference type="PROSITE-ProRule" id="PRU00968"/>
    </source>
</evidence>
<gene>
    <name type="primary">MT-CYB</name>
    <name type="synonym">COB</name>
    <name type="synonym">CYTB</name>
    <name type="synonym">MTCYB</name>
</gene>
<reference key="1">
    <citation type="journal article" date="2000" name="Evolution">
        <title>Mitochondrial DNA phylogeography of the polytypic North American rat snake (Elaphe obsoleta): a critique of the subspecies concept.</title>
        <authorList>
            <person name="Burbrink F.T."/>
            <person name="Lawson R."/>
            <person name="Slowinski J.B."/>
        </authorList>
    </citation>
    <scope>NUCLEOTIDE SEQUENCE [GENOMIC DNA]</scope>
</reference>
<keyword id="KW-0249">Electron transport</keyword>
<keyword id="KW-0349">Heme</keyword>
<keyword id="KW-0408">Iron</keyword>
<keyword id="KW-0472">Membrane</keyword>
<keyword id="KW-0479">Metal-binding</keyword>
<keyword id="KW-0496">Mitochondrion</keyword>
<keyword id="KW-0999">Mitochondrion inner membrane</keyword>
<keyword id="KW-0679">Respiratory chain</keyword>
<keyword id="KW-0812">Transmembrane</keyword>
<keyword id="KW-1133">Transmembrane helix</keyword>
<keyword id="KW-0813">Transport</keyword>
<keyword id="KW-0830">Ubiquinone</keyword>
<name>CYB_PANVU</name>
<organism>
    <name type="scientific">Pantherophis vulpinus</name>
    <name type="common">Western fox snake</name>
    <name type="synonym">Elaphe vulpina</name>
    <dbReference type="NCBI Taxonomy" id="94886"/>
    <lineage>
        <taxon>Eukaryota</taxon>
        <taxon>Metazoa</taxon>
        <taxon>Chordata</taxon>
        <taxon>Craniata</taxon>
        <taxon>Vertebrata</taxon>
        <taxon>Euteleostomi</taxon>
        <taxon>Lepidosauria</taxon>
        <taxon>Squamata</taxon>
        <taxon>Bifurcata</taxon>
        <taxon>Unidentata</taxon>
        <taxon>Episquamata</taxon>
        <taxon>Toxicofera</taxon>
        <taxon>Serpentes</taxon>
        <taxon>Colubroidea</taxon>
        <taxon>Colubridae</taxon>
        <taxon>Colubrinae</taxon>
        <taxon>Pantherophis</taxon>
    </lineage>
</organism>
<proteinExistence type="inferred from homology"/>
<sequence>MPNQHMLLLFNLLPVGSNISIWWNFGSMLLTCLALQTMTGFFLAIHYTANINLAFSSIVHITRDVPYGWMMQNLHAIGASMFFICIYIHIARGLYYGSFLNKNVWLSGTTLLIILMATAFFGYVLPWGQMSFWAATVITNLLTAVPYIGTELTNWLWGGFSINDPTLTRFFALHFILPFTIISMSSIHIMLLHTEGSSNPLGTNSDIDKIPFHPYHSHKDMLMFTIMITMLFIIMSFTPNIFNDPENFSKANPLVTPQHIKPEWYFLFAYGILRSIPNKLGGTVALVLSVTILLTMPFTHTSHMRSMTFRPLMQFMFWTLVATFITITWAATKPVEPPFTSIGQVTAILYFLFFTMNPLLGWLENKISMTNT</sequence>
<geneLocation type="mitochondrion"/>
<comment type="function">
    <text evidence="2">Component of the ubiquinol-cytochrome c reductase complex (complex III or cytochrome b-c1 complex) that is part of the mitochondrial respiratory chain. The b-c1 complex mediates electron transfer from ubiquinol to cytochrome c. Contributes to the generation of a proton gradient across the mitochondrial membrane that is then used for ATP synthesis.</text>
</comment>
<comment type="cofactor">
    <cofactor evidence="2">
        <name>heme b</name>
        <dbReference type="ChEBI" id="CHEBI:60344"/>
    </cofactor>
    <text evidence="2">Binds 2 heme b groups non-covalently.</text>
</comment>
<comment type="subunit">
    <text evidence="2">The cytochrome bc1 complex contains 3 respiratory subunits (MT-CYB, CYC1 and UQCRFS1), 2 core proteins (UQCRC1 and UQCRC2) and probably 6 low-molecular weight proteins.</text>
</comment>
<comment type="subcellular location">
    <subcellularLocation>
        <location evidence="2">Mitochondrion inner membrane</location>
        <topology evidence="2">Multi-pass membrane protein</topology>
    </subcellularLocation>
</comment>
<comment type="miscellaneous">
    <text evidence="1">Heme 1 (or BL or b562) is low-potential and absorbs at about 562 nm, and heme 2 (or BH or b566) is high-potential and absorbs at about 566 nm.</text>
</comment>
<comment type="similarity">
    <text evidence="3 4">Belongs to the cytochrome b family.</text>
</comment>
<comment type="caution">
    <text evidence="2">The full-length protein contains only eight transmembrane helices, not nine as predicted by bioinformatics tools.</text>
</comment>
<accession>Q9G964</accession>
<dbReference type="EMBL" id="AF283638">
    <property type="protein sequence ID" value="AAG26454.1"/>
    <property type="molecule type" value="Genomic_DNA"/>
</dbReference>
<dbReference type="SMR" id="Q9G964"/>
<dbReference type="GO" id="GO:0005743">
    <property type="term" value="C:mitochondrial inner membrane"/>
    <property type="evidence" value="ECO:0007669"/>
    <property type="project" value="UniProtKB-SubCell"/>
</dbReference>
<dbReference type="GO" id="GO:0045275">
    <property type="term" value="C:respiratory chain complex III"/>
    <property type="evidence" value="ECO:0007669"/>
    <property type="project" value="InterPro"/>
</dbReference>
<dbReference type="GO" id="GO:0046872">
    <property type="term" value="F:metal ion binding"/>
    <property type="evidence" value="ECO:0007669"/>
    <property type="project" value="UniProtKB-KW"/>
</dbReference>
<dbReference type="GO" id="GO:0008121">
    <property type="term" value="F:ubiquinol-cytochrome-c reductase activity"/>
    <property type="evidence" value="ECO:0007669"/>
    <property type="project" value="InterPro"/>
</dbReference>
<dbReference type="GO" id="GO:0006122">
    <property type="term" value="P:mitochondrial electron transport, ubiquinol to cytochrome c"/>
    <property type="evidence" value="ECO:0007669"/>
    <property type="project" value="TreeGrafter"/>
</dbReference>
<dbReference type="CDD" id="cd00290">
    <property type="entry name" value="cytochrome_b_C"/>
    <property type="match status" value="1"/>
</dbReference>
<dbReference type="CDD" id="cd00284">
    <property type="entry name" value="Cytochrome_b_N"/>
    <property type="match status" value="1"/>
</dbReference>
<dbReference type="Gene3D" id="1.20.810.10">
    <property type="entry name" value="Cytochrome Bc1 Complex, Chain C"/>
    <property type="match status" value="1"/>
</dbReference>
<dbReference type="InterPro" id="IPR005798">
    <property type="entry name" value="Cyt_b/b6_C"/>
</dbReference>
<dbReference type="InterPro" id="IPR036150">
    <property type="entry name" value="Cyt_b/b6_C_sf"/>
</dbReference>
<dbReference type="InterPro" id="IPR005797">
    <property type="entry name" value="Cyt_b/b6_N"/>
</dbReference>
<dbReference type="InterPro" id="IPR027387">
    <property type="entry name" value="Cytb/b6-like_sf"/>
</dbReference>
<dbReference type="InterPro" id="IPR030689">
    <property type="entry name" value="Cytochrome_b"/>
</dbReference>
<dbReference type="InterPro" id="IPR048260">
    <property type="entry name" value="Cytochrome_b_C_euk/bac"/>
</dbReference>
<dbReference type="InterPro" id="IPR048259">
    <property type="entry name" value="Cytochrome_b_N_euk/bac"/>
</dbReference>
<dbReference type="InterPro" id="IPR016174">
    <property type="entry name" value="Di-haem_cyt_TM"/>
</dbReference>
<dbReference type="PANTHER" id="PTHR19271">
    <property type="entry name" value="CYTOCHROME B"/>
    <property type="match status" value="1"/>
</dbReference>
<dbReference type="PANTHER" id="PTHR19271:SF16">
    <property type="entry name" value="CYTOCHROME B"/>
    <property type="match status" value="1"/>
</dbReference>
<dbReference type="Pfam" id="PF00032">
    <property type="entry name" value="Cytochrom_B_C"/>
    <property type="match status" value="1"/>
</dbReference>
<dbReference type="Pfam" id="PF00033">
    <property type="entry name" value="Cytochrome_B"/>
    <property type="match status" value="1"/>
</dbReference>
<dbReference type="PIRSF" id="PIRSF038885">
    <property type="entry name" value="COB"/>
    <property type="match status" value="1"/>
</dbReference>
<dbReference type="SUPFAM" id="SSF81648">
    <property type="entry name" value="a domain/subunit of cytochrome bc1 complex (Ubiquinol-cytochrome c reductase)"/>
    <property type="match status" value="1"/>
</dbReference>
<dbReference type="SUPFAM" id="SSF81342">
    <property type="entry name" value="Transmembrane di-heme cytochromes"/>
    <property type="match status" value="1"/>
</dbReference>
<dbReference type="PROSITE" id="PS51003">
    <property type="entry name" value="CYTB_CTER"/>
    <property type="match status" value="1"/>
</dbReference>
<dbReference type="PROSITE" id="PS51002">
    <property type="entry name" value="CYTB_NTER"/>
    <property type="match status" value="1"/>
</dbReference>